<protein>
    <recommendedName>
        <fullName evidence="1">ATP synthase subunit b</fullName>
    </recommendedName>
    <alternativeName>
        <fullName evidence="1">ATP synthase F(0) sector subunit b</fullName>
    </alternativeName>
    <alternativeName>
        <fullName evidence="1">ATPase subunit I</fullName>
    </alternativeName>
    <alternativeName>
        <fullName evidence="1">F-type ATPase subunit b</fullName>
        <shortName evidence="1">F-ATPase subunit b</shortName>
    </alternativeName>
</protein>
<accession>B2SQB4</accession>
<feature type="chain" id="PRO_0000368873" description="ATP synthase subunit b">
    <location>
        <begin position="1"/>
        <end position="156"/>
    </location>
</feature>
<feature type="transmembrane region" description="Helical" evidence="1">
    <location>
        <begin position="3"/>
        <end position="23"/>
    </location>
</feature>
<organism>
    <name type="scientific">Xanthomonas oryzae pv. oryzae (strain PXO99A)</name>
    <dbReference type="NCBI Taxonomy" id="360094"/>
    <lineage>
        <taxon>Bacteria</taxon>
        <taxon>Pseudomonadati</taxon>
        <taxon>Pseudomonadota</taxon>
        <taxon>Gammaproteobacteria</taxon>
        <taxon>Lysobacterales</taxon>
        <taxon>Lysobacteraceae</taxon>
        <taxon>Xanthomonas</taxon>
    </lineage>
</organism>
<comment type="function">
    <text evidence="1">F(1)F(0) ATP synthase produces ATP from ADP in the presence of a proton or sodium gradient. F-type ATPases consist of two structural domains, F(1) containing the extramembraneous catalytic core and F(0) containing the membrane proton channel, linked together by a central stalk and a peripheral stalk. During catalysis, ATP synthesis in the catalytic domain of F(1) is coupled via a rotary mechanism of the central stalk subunits to proton translocation.</text>
</comment>
<comment type="function">
    <text evidence="1">Component of the F(0) channel, it forms part of the peripheral stalk, linking F(1) to F(0).</text>
</comment>
<comment type="subunit">
    <text evidence="1">F-type ATPases have 2 components, F(1) - the catalytic core - and F(0) - the membrane proton channel. F(1) has five subunits: alpha(3), beta(3), gamma(1), delta(1), epsilon(1). F(0) has three main subunits: a(1), b(2) and c(10-14). The alpha and beta chains form an alternating ring which encloses part of the gamma chain. F(1) is attached to F(0) by a central stalk formed by the gamma and epsilon chains, while a peripheral stalk is formed by the delta and b chains.</text>
</comment>
<comment type="subcellular location">
    <subcellularLocation>
        <location evidence="1">Cell inner membrane</location>
        <topology evidence="1">Single-pass membrane protein</topology>
    </subcellularLocation>
</comment>
<comment type="similarity">
    <text evidence="1">Belongs to the ATPase B chain family.</text>
</comment>
<sequence>MDITLTIFAQALAFAGLIWIVATKIWPPLLQAIEERQQKIAEGLAAADRSQKDLAQAQEKVNEVLKDARTKANEIIDQAHARANQIIEAAKLEAIAEANRQKELAQTEIDASATRAREELRKQVSVLAVSGAEKLLKREIDANAHKALLDELAAEI</sequence>
<gene>
    <name evidence="1" type="primary">atpF</name>
    <name type="ordered locus">PXO_03109</name>
</gene>
<reference key="1">
    <citation type="journal article" date="2008" name="BMC Genomics">
        <title>Genome sequence and rapid evolution of the rice pathogen Xanthomonas oryzae pv. oryzae PXO99A.</title>
        <authorList>
            <person name="Salzberg S.L."/>
            <person name="Sommer D.D."/>
            <person name="Schatz M.C."/>
            <person name="Phillippy A.M."/>
            <person name="Rabinowicz P.D."/>
            <person name="Tsuge S."/>
            <person name="Furutani A."/>
            <person name="Ochiai H."/>
            <person name="Delcher A.L."/>
            <person name="Kelley D."/>
            <person name="Madupu R."/>
            <person name="Puiu D."/>
            <person name="Radune D."/>
            <person name="Shumway M."/>
            <person name="Trapnell C."/>
            <person name="Aparna G."/>
            <person name="Jha G."/>
            <person name="Pandey A."/>
            <person name="Patil P.B."/>
            <person name="Ishihara H."/>
            <person name="Meyer D.F."/>
            <person name="Szurek B."/>
            <person name="Verdier V."/>
            <person name="Koebnik R."/>
            <person name="Dow J.M."/>
            <person name="Ryan R.P."/>
            <person name="Hirata H."/>
            <person name="Tsuyumu S."/>
            <person name="Won Lee S."/>
            <person name="Seo Y.-S."/>
            <person name="Sriariyanum M."/>
            <person name="Ronald P.C."/>
            <person name="Sonti R.V."/>
            <person name="Van Sluys M.-A."/>
            <person name="Leach J.E."/>
            <person name="White F.F."/>
            <person name="Bogdanove A.J."/>
        </authorList>
    </citation>
    <scope>NUCLEOTIDE SEQUENCE [LARGE SCALE GENOMIC DNA]</scope>
    <source>
        <strain>PXO99A</strain>
    </source>
</reference>
<name>ATPF_XANOP</name>
<dbReference type="EMBL" id="CP000967">
    <property type="protein sequence ID" value="ACD61112.1"/>
    <property type="molecule type" value="Genomic_DNA"/>
</dbReference>
<dbReference type="RefSeq" id="WP_011257621.1">
    <property type="nucleotide sequence ID" value="NC_010717.2"/>
</dbReference>
<dbReference type="SMR" id="B2SQB4"/>
<dbReference type="KEGG" id="xop:PXO_03109"/>
<dbReference type="eggNOG" id="COG0711">
    <property type="taxonomic scope" value="Bacteria"/>
</dbReference>
<dbReference type="HOGENOM" id="CLU_079215_4_5_6"/>
<dbReference type="Proteomes" id="UP000001740">
    <property type="component" value="Chromosome"/>
</dbReference>
<dbReference type="GO" id="GO:0005886">
    <property type="term" value="C:plasma membrane"/>
    <property type="evidence" value="ECO:0007669"/>
    <property type="project" value="UniProtKB-SubCell"/>
</dbReference>
<dbReference type="GO" id="GO:0045259">
    <property type="term" value="C:proton-transporting ATP synthase complex"/>
    <property type="evidence" value="ECO:0007669"/>
    <property type="project" value="UniProtKB-KW"/>
</dbReference>
<dbReference type="GO" id="GO:0046933">
    <property type="term" value="F:proton-transporting ATP synthase activity, rotational mechanism"/>
    <property type="evidence" value="ECO:0007669"/>
    <property type="project" value="UniProtKB-UniRule"/>
</dbReference>
<dbReference type="GO" id="GO:0046961">
    <property type="term" value="F:proton-transporting ATPase activity, rotational mechanism"/>
    <property type="evidence" value="ECO:0007669"/>
    <property type="project" value="TreeGrafter"/>
</dbReference>
<dbReference type="CDD" id="cd06503">
    <property type="entry name" value="ATP-synt_Fo_b"/>
    <property type="match status" value="1"/>
</dbReference>
<dbReference type="Gene3D" id="6.10.250.1580">
    <property type="match status" value="1"/>
</dbReference>
<dbReference type="HAMAP" id="MF_01398">
    <property type="entry name" value="ATP_synth_b_bprime"/>
    <property type="match status" value="1"/>
</dbReference>
<dbReference type="InterPro" id="IPR028987">
    <property type="entry name" value="ATP_synth_B-like_membr_sf"/>
</dbReference>
<dbReference type="InterPro" id="IPR002146">
    <property type="entry name" value="ATP_synth_b/b'su_bac/chlpt"/>
</dbReference>
<dbReference type="InterPro" id="IPR005864">
    <property type="entry name" value="ATP_synth_F0_bsu_bac"/>
</dbReference>
<dbReference type="InterPro" id="IPR050059">
    <property type="entry name" value="ATP_synthase_B_chain"/>
</dbReference>
<dbReference type="NCBIfam" id="TIGR01144">
    <property type="entry name" value="ATP_synt_b"/>
    <property type="match status" value="1"/>
</dbReference>
<dbReference type="NCBIfam" id="NF004411">
    <property type="entry name" value="PRK05759.1-2"/>
    <property type="match status" value="1"/>
</dbReference>
<dbReference type="PANTHER" id="PTHR33445:SF1">
    <property type="entry name" value="ATP SYNTHASE SUBUNIT B"/>
    <property type="match status" value="1"/>
</dbReference>
<dbReference type="PANTHER" id="PTHR33445">
    <property type="entry name" value="ATP SYNTHASE SUBUNIT B', CHLOROPLASTIC"/>
    <property type="match status" value="1"/>
</dbReference>
<dbReference type="Pfam" id="PF00430">
    <property type="entry name" value="ATP-synt_B"/>
    <property type="match status" value="1"/>
</dbReference>
<dbReference type="SUPFAM" id="SSF81573">
    <property type="entry name" value="F1F0 ATP synthase subunit B, membrane domain"/>
    <property type="match status" value="1"/>
</dbReference>
<keyword id="KW-0066">ATP synthesis</keyword>
<keyword id="KW-0997">Cell inner membrane</keyword>
<keyword id="KW-1003">Cell membrane</keyword>
<keyword id="KW-0138">CF(0)</keyword>
<keyword id="KW-0375">Hydrogen ion transport</keyword>
<keyword id="KW-0406">Ion transport</keyword>
<keyword id="KW-0472">Membrane</keyword>
<keyword id="KW-0812">Transmembrane</keyword>
<keyword id="KW-1133">Transmembrane helix</keyword>
<keyword id="KW-0813">Transport</keyword>
<proteinExistence type="inferred from homology"/>
<evidence type="ECO:0000255" key="1">
    <source>
        <dbReference type="HAMAP-Rule" id="MF_01398"/>
    </source>
</evidence>